<accession>A0Q4S4</accession>
<dbReference type="EMBL" id="CP000439">
    <property type="protein sequence ID" value="ABK89239.1"/>
    <property type="molecule type" value="Genomic_DNA"/>
</dbReference>
<dbReference type="RefSeq" id="WP_003014822.1">
    <property type="nucleotide sequence ID" value="NZ_CP009633.1"/>
</dbReference>
<dbReference type="SMR" id="A0Q4S4"/>
<dbReference type="GeneID" id="75264165"/>
<dbReference type="KEGG" id="ftn:FTN_0333"/>
<dbReference type="KEGG" id="ftx:AW25_1707"/>
<dbReference type="BioCyc" id="FTUL401614:G1G75-346-MONOMER"/>
<dbReference type="Proteomes" id="UP000000762">
    <property type="component" value="Chromosome"/>
</dbReference>
<dbReference type="GO" id="GO:0022625">
    <property type="term" value="C:cytosolic large ribosomal subunit"/>
    <property type="evidence" value="ECO:0007669"/>
    <property type="project" value="TreeGrafter"/>
</dbReference>
<dbReference type="GO" id="GO:0003735">
    <property type="term" value="F:structural constituent of ribosome"/>
    <property type="evidence" value="ECO:0007669"/>
    <property type="project" value="InterPro"/>
</dbReference>
<dbReference type="GO" id="GO:0006412">
    <property type="term" value="P:translation"/>
    <property type="evidence" value="ECO:0007669"/>
    <property type="project" value="UniProtKB-UniRule"/>
</dbReference>
<dbReference type="FunFam" id="2.30.170.40:FF:000001">
    <property type="entry name" value="50S ribosomal protein L28"/>
    <property type="match status" value="1"/>
</dbReference>
<dbReference type="Gene3D" id="2.30.170.40">
    <property type="entry name" value="Ribosomal protein L28/L24"/>
    <property type="match status" value="1"/>
</dbReference>
<dbReference type="HAMAP" id="MF_00373">
    <property type="entry name" value="Ribosomal_bL28"/>
    <property type="match status" value="1"/>
</dbReference>
<dbReference type="InterPro" id="IPR026569">
    <property type="entry name" value="Ribosomal_bL28"/>
</dbReference>
<dbReference type="InterPro" id="IPR034704">
    <property type="entry name" value="Ribosomal_bL28/bL31-like_sf"/>
</dbReference>
<dbReference type="InterPro" id="IPR001383">
    <property type="entry name" value="Ribosomal_bL28_bact-type"/>
</dbReference>
<dbReference type="InterPro" id="IPR037147">
    <property type="entry name" value="Ribosomal_bL28_sf"/>
</dbReference>
<dbReference type="NCBIfam" id="TIGR00009">
    <property type="entry name" value="L28"/>
    <property type="match status" value="1"/>
</dbReference>
<dbReference type="PANTHER" id="PTHR13528">
    <property type="entry name" value="39S RIBOSOMAL PROTEIN L28, MITOCHONDRIAL"/>
    <property type="match status" value="1"/>
</dbReference>
<dbReference type="PANTHER" id="PTHR13528:SF2">
    <property type="entry name" value="LARGE RIBOSOMAL SUBUNIT PROTEIN BL28M"/>
    <property type="match status" value="1"/>
</dbReference>
<dbReference type="Pfam" id="PF00830">
    <property type="entry name" value="Ribosomal_L28"/>
    <property type="match status" value="1"/>
</dbReference>
<dbReference type="SUPFAM" id="SSF143800">
    <property type="entry name" value="L28p-like"/>
    <property type="match status" value="1"/>
</dbReference>
<protein>
    <recommendedName>
        <fullName evidence="1">Large ribosomal subunit protein bL28</fullName>
    </recommendedName>
    <alternativeName>
        <fullName evidence="2">50S ribosomal protein L28</fullName>
    </alternativeName>
</protein>
<name>RL28_FRATN</name>
<organism>
    <name type="scientific">Francisella tularensis subsp. novicida (strain U112)</name>
    <dbReference type="NCBI Taxonomy" id="401614"/>
    <lineage>
        <taxon>Bacteria</taxon>
        <taxon>Pseudomonadati</taxon>
        <taxon>Pseudomonadota</taxon>
        <taxon>Gammaproteobacteria</taxon>
        <taxon>Thiotrichales</taxon>
        <taxon>Francisellaceae</taxon>
        <taxon>Francisella</taxon>
    </lineage>
</organism>
<proteinExistence type="inferred from homology"/>
<sequence length="78" mass="8939">MSKVCIVTGKRPATGNNVSHAQNKTKRRFLPNLHAHRFWVESENRYIKLRVSSKGMRIIDKKGIDTVLSDLRAQGHKI</sequence>
<gene>
    <name evidence="1" type="primary">rpmB</name>
    <name type="ordered locus">FTN_0333</name>
</gene>
<keyword id="KW-0687">Ribonucleoprotein</keyword>
<keyword id="KW-0689">Ribosomal protein</keyword>
<reference key="1">
    <citation type="journal article" date="2007" name="Genome Biol.">
        <title>Comparison of Francisella tularensis genomes reveals evolutionary events associated with the emergence of human pathogenic strains.</title>
        <authorList>
            <person name="Rohmer L."/>
            <person name="Fong C."/>
            <person name="Abmayr S."/>
            <person name="Wasnick M."/>
            <person name="Larson Freeman T.J."/>
            <person name="Radey M."/>
            <person name="Guina T."/>
            <person name="Svensson K."/>
            <person name="Hayden H.S."/>
            <person name="Jacobs M."/>
            <person name="Gallagher L.A."/>
            <person name="Manoil C."/>
            <person name="Ernst R.K."/>
            <person name="Drees B."/>
            <person name="Buckley D."/>
            <person name="Haugen E."/>
            <person name="Bovee D."/>
            <person name="Zhou Y."/>
            <person name="Chang J."/>
            <person name="Levy R."/>
            <person name="Lim R."/>
            <person name="Gillett W."/>
            <person name="Guenthener D."/>
            <person name="Kang A."/>
            <person name="Shaffer S.A."/>
            <person name="Taylor G."/>
            <person name="Chen J."/>
            <person name="Gallis B."/>
            <person name="D'Argenio D.A."/>
            <person name="Forsman M."/>
            <person name="Olson M.V."/>
            <person name="Goodlett D.R."/>
            <person name="Kaul R."/>
            <person name="Miller S.I."/>
            <person name="Brittnacher M.J."/>
        </authorList>
    </citation>
    <scope>NUCLEOTIDE SEQUENCE [LARGE SCALE GENOMIC DNA]</scope>
    <source>
        <strain>U112</strain>
    </source>
</reference>
<evidence type="ECO:0000255" key="1">
    <source>
        <dbReference type="HAMAP-Rule" id="MF_00373"/>
    </source>
</evidence>
<evidence type="ECO:0000305" key="2"/>
<comment type="similarity">
    <text evidence="1">Belongs to the bacterial ribosomal protein bL28 family.</text>
</comment>
<feature type="chain" id="PRO_1000007240" description="Large ribosomal subunit protein bL28">
    <location>
        <begin position="1"/>
        <end position="78"/>
    </location>
</feature>